<proteinExistence type="evidence at protein level"/>
<protein>
    <recommendedName>
        <fullName>Lactase-like protein</fullName>
    </recommendedName>
    <alternativeName>
        <fullName>Klotho/lactase-phlorizin hydrolase-related protein</fullName>
    </alternativeName>
</protein>
<gene>
    <name type="primary">Lctl</name>
    <name type="synonym">Klph</name>
</gene>
<comment type="function">
    <text evidence="3">Plays a role in formation of the lens suture in the eye, which is important for normal optical properties of the lens.</text>
</comment>
<comment type="subunit">
    <text evidence="3">May form dimers.</text>
</comment>
<comment type="subcellular location">
    <subcellularLocation>
        <location evidence="6">Endoplasmic reticulum membrane</location>
        <topology evidence="6">Single-pass membrane protein</topology>
    </subcellularLocation>
</comment>
<comment type="alternative products">
    <event type="alternative splicing"/>
    <isoform>
        <id>Q8K1F9-1</id>
        <name>1</name>
        <sequence type="displayed"/>
    </isoform>
    <isoform>
        <id>Q8K1F9-3</id>
        <name>3</name>
        <sequence type="described" ref="VSP_015833 VSP_015834"/>
    </isoform>
</comment>
<comment type="tissue specificity">
    <text evidence="2 3">Strongly expressed in the lens of the eye, where it localizes to the equatorial epithelium and outer layers of newly extending fiber cells (at protein level) (PubMed:29425878). May also be expressed in kidney and skin (PubMed:12084582). However, another study suggests that expression is specific to eye and is minimal in other tissues (PubMed:29425878).</text>
</comment>
<comment type="disruption phenotype">
    <text evidence="3">No visible phenotype. The lens of the eye appears normal in young animals. However, formation of the lens suture is abnormal with an X-shaped or double-Y shaped morphology instead of a tight Y-shaped pattern. Optics of the lens are distorted and cortical cataracts develop; the phenotype progressively worsens with age. Expression of CLIC5 in the lens epithelium is almost completely absent.</text>
</comment>
<comment type="similarity">
    <text evidence="5">Belongs to the glycosyl hydrolase 1 family. Klotho subfamily.</text>
</comment>
<comment type="caution">
    <text evidence="5">Although it belongs to the glycosyl hydrolase 1 family, Asp-200 is present instead of the conserved Glu which is an active site residue. It is therefore expected that this protein lacks glycosidase activity.</text>
</comment>
<comment type="sequence caution" evidence="5">
    <conflict type="erroneous initiation">
        <sequence resource="EMBL-CDS" id="AAH30631"/>
    </conflict>
</comment>
<accession>Q8K1F9</accession>
<accession>Q8BPR1</accession>
<accession>Q8K2M9</accession>
<reference key="1">
    <citation type="journal article" date="2002" name="Biochim. Biophys. Acta">
        <title>Identification of a novel mouse membrane-bound family 1 glycosidase-like protein, which carries an atypical active site structure.</title>
        <authorList>
            <person name="Ito S."/>
            <person name="Fujimori T."/>
            <person name="Hayashizaki Y."/>
            <person name="Nabeshima Y."/>
        </authorList>
    </citation>
    <scope>NUCLEOTIDE SEQUENCE [MRNA] (ISOFORM 1)</scope>
    <scope>TISSUE SPECIFICITY</scope>
    <scope>SUBCELLULAR LOCATION</scope>
    <source>
        <strain>C57BL/6J</strain>
        <tissue>Aorta</tissue>
        <tissue>Vein</tissue>
    </source>
</reference>
<reference key="2">
    <citation type="journal article" date="2004" name="Genome Res.">
        <title>The status, quality, and expansion of the NIH full-length cDNA project: the Mammalian Gene Collection (MGC).</title>
        <authorList>
            <consortium name="The MGC Project Team"/>
        </authorList>
    </citation>
    <scope>NUCLEOTIDE SEQUENCE [LARGE SCALE MRNA] (ISOFORM 3)</scope>
    <source>
        <strain>C57BL/6J</strain>
        <tissue>Mammary gland</tissue>
    </source>
</reference>
<reference key="3">
    <citation type="journal article" date="2018" name="Exp. Eye Res.">
        <title>The klotho-related protein KLPH (lctl) has preferred expression in lens and is essential for expression of clic5 and normal lens suture formation.</title>
        <authorList>
            <person name="Fan J."/>
            <person name="Lerner J."/>
            <person name="Wyatt M.K."/>
            <person name="Cai P."/>
            <person name="Peterson K."/>
            <person name="Dong L."/>
            <person name="Wistow G."/>
        </authorList>
    </citation>
    <scope>FUNCTION</scope>
    <scope>SUBUNIT</scope>
    <scope>TISSUE SPECIFICITY</scope>
    <scope>DISRUPTION PHENOTYPE</scope>
</reference>
<dbReference type="EMBL" id="AF309072">
    <property type="protein sequence ID" value="AAM77699.1"/>
    <property type="molecule type" value="mRNA"/>
</dbReference>
<dbReference type="EMBL" id="BC030631">
    <property type="protein sequence ID" value="AAH30631.1"/>
    <property type="status" value="ALT_INIT"/>
    <property type="molecule type" value="mRNA"/>
</dbReference>
<dbReference type="CCDS" id="CCDS23274.1">
    <molecule id="Q8K1F9-1"/>
</dbReference>
<dbReference type="RefSeq" id="NP_665834.1">
    <molecule id="Q8K1F9-1"/>
    <property type="nucleotide sequence ID" value="NM_145835.3"/>
</dbReference>
<dbReference type="SMR" id="Q8K1F9"/>
<dbReference type="BioGRID" id="231660">
    <property type="interactions" value="1"/>
</dbReference>
<dbReference type="FunCoup" id="Q8K1F9">
    <property type="interactions" value="136"/>
</dbReference>
<dbReference type="STRING" id="10090.ENSMUSP00000034969"/>
<dbReference type="CAZy" id="GH1">
    <property type="family name" value="Glycoside Hydrolase Family 1"/>
</dbReference>
<dbReference type="GlyCosmos" id="Q8K1F9">
    <property type="glycosylation" value="2 sites, No reported glycans"/>
</dbReference>
<dbReference type="GlyGen" id="Q8K1F9">
    <property type="glycosylation" value="2 sites"/>
</dbReference>
<dbReference type="PhosphoSitePlus" id="Q8K1F9"/>
<dbReference type="PaxDb" id="10090-ENSMUSP00000034969"/>
<dbReference type="ProteomicsDB" id="292246">
    <molecule id="Q8K1F9-1"/>
</dbReference>
<dbReference type="ProteomicsDB" id="292247">
    <molecule id="Q8K1F9-3"/>
</dbReference>
<dbReference type="Antibodypedia" id="26209">
    <property type="antibodies" value="43 antibodies from 18 providers"/>
</dbReference>
<dbReference type="DNASU" id="235435"/>
<dbReference type="Ensembl" id="ENSMUST00000034969.14">
    <molecule id="Q8K1F9-1"/>
    <property type="protein sequence ID" value="ENSMUSP00000034969.8"/>
    <property type="gene ID" value="ENSMUSG00000032401.16"/>
</dbReference>
<dbReference type="GeneID" id="235435"/>
<dbReference type="KEGG" id="mmu:235435"/>
<dbReference type="UCSC" id="uc009qbl.1">
    <molecule id="Q8K1F9-1"/>
    <property type="organism name" value="mouse"/>
</dbReference>
<dbReference type="AGR" id="MGI:2183549"/>
<dbReference type="CTD" id="197021"/>
<dbReference type="MGI" id="MGI:2183549">
    <property type="gene designation" value="Lctl"/>
</dbReference>
<dbReference type="VEuPathDB" id="HostDB:ENSMUSG00000032401"/>
<dbReference type="eggNOG" id="KOG0626">
    <property type="taxonomic scope" value="Eukaryota"/>
</dbReference>
<dbReference type="GeneTree" id="ENSGT00940000157369"/>
<dbReference type="HOGENOM" id="CLU_001859_1_3_1"/>
<dbReference type="InParanoid" id="Q8K1F9"/>
<dbReference type="OMA" id="HGSNDFY"/>
<dbReference type="OrthoDB" id="65569at2759"/>
<dbReference type="PhylomeDB" id="Q8K1F9"/>
<dbReference type="TreeFam" id="TF314803"/>
<dbReference type="BioGRID-ORCS" id="235435">
    <property type="hits" value="3 hits in 82 CRISPR screens"/>
</dbReference>
<dbReference type="ChiTaRS" id="Lctl">
    <property type="organism name" value="mouse"/>
</dbReference>
<dbReference type="PRO" id="PR:Q8K1F9"/>
<dbReference type="Proteomes" id="UP000000589">
    <property type="component" value="Chromosome 9"/>
</dbReference>
<dbReference type="RNAct" id="Q8K1F9">
    <property type="molecule type" value="protein"/>
</dbReference>
<dbReference type="Bgee" id="ENSMUSG00000032401">
    <property type="expression patterns" value="Expressed in lens of camera-type eye and 31 other cell types or tissues"/>
</dbReference>
<dbReference type="ExpressionAtlas" id="Q8K1F9">
    <property type="expression patterns" value="baseline and differential"/>
</dbReference>
<dbReference type="GO" id="GO:0005903">
    <property type="term" value="C:brush border"/>
    <property type="evidence" value="ECO:0000314"/>
    <property type="project" value="UniProtKB"/>
</dbReference>
<dbReference type="GO" id="GO:0005783">
    <property type="term" value="C:endoplasmic reticulum"/>
    <property type="evidence" value="ECO:0000314"/>
    <property type="project" value="MGI"/>
</dbReference>
<dbReference type="GO" id="GO:0005789">
    <property type="term" value="C:endoplasmic reticulum membrane"/>
    <property type="evidence" value="ECO:0007669"/>
    <property type="project" value="UniProtKB-SubCell"/>
</dbReference>
<dbReference type="GO" id="GO:0004553">
    <property type="term" value="F:hydrolase activity, hydrolyzing O-glycosyl compounds"/>
    <property type="evidence" value="ECO:0007669"/>
    <property type="project" value="InterPro"/>
</dbReference>
<dbReference type="GO" id="GO:0005975">
    <property type="term" value="P:carbohydrate metabolic process"/>
    <property type="evidence" value="ECO:0007669"/>
    <property type="project" value="InterPro"/>
</dbReference>
<dbReference type="GO" id="GO:0002089">
    <property type="term" value="P:lens morphogenesis in camera-type eye"/>
    <property type="evidence" value="ECO:0000315"/>
    <property type="project" value="UniProtKB"/>
</dbReference>
<dbReference type="GO" id="GO:0007601">
    <property type="term" value="P:visual perception"/>
    <property type="evidence" value="ECO:0007669"/>
    <property type="project" value="UniProtKB-KW"/>
</dbReference>
<dbReference type="FunFam" id="3.20.20.80:FF:000399">
    <property type="entry name" value="Lactase-like protein"/>
    <property type="match status" value="1"/>
</dbReference>
<dbReference type="Gene3D" id="3.20.20.80">
    <property type="entry name" value="Glycosidases"/>
    <property type="match status" value="1"/>
</dbReference>
<dbReference type="InterPro" id="IPR001360">
    <property type="entry name" value="Glyco_hydro_1"/>
</dbReference>
<dbReference type="InterPro" id="IPR033132">
    <property type="entry name" value="Glyco_hydro_1_N_CS"/>
</dbReference>
<dbReference type="InterPro" id="IPR017853">
    <property type="entry name" value="Glycoside_hydrolase_SF"/>
</dbReference>
<dbReference type="PANTHER" id="PTHR10353">
    <property type="entry name" value="GLYCOSYL HYDROLASE"/>
    <property type="match status" value="1"/>
</dbReference>
<dbReference type="PANTHER" id="PTHR10353:SF336">
    <property type="entry name" value="LACTASE-LIKE PROTEIN"/>
    <property type="match status" value="1"/>
</dbReference>
<dbReference type="Pfam" id="PF00232">
    <property type="entry name" value="Glyco_hydro_1"/>
    <property type="match status" value="1"/>
</dbReference>
<dbReference type="PRINTS" id="PR00131">
    <property type="entry name" value="GLHYDRLASE1"/>
</dbReference>
<dbReference type="SUPFAM" id="SSF51445">
    <property type="entry name" value="(Trans)glycosidases"/>
    <property type="match status" value="1"/>
</dbReference>
<dbReference type="PROSITE" id="PS00653">
    <property type="entry name" value="GLYCOSYL_HYDROL_F1_2"/>
    <property type="match status" value="1"/>
</dbReference>
<organism>
    <name type="scientific">Mus musculus</name>
    <name type="common">Mouse</name>
    <dbReference type="NCBI Taxonomy" id="10090"/>
    <lineage>
        <taxon>Eukaryota</taxon>
        <taxon>Metazoa</taxon>
        <taxon>Chordata</taxon>
        <taxon>Craniata</taxon>
        <taxon>Vertebrata</taxon>
        <taxon>Euteleostomi</taxon>
        <taxon>Mammalia</taxon>
        <taxon>Eutheria</taxon>
        <taxon>Euarchontoglires</taxon>
        <taxon>Glires</taxon>
        <taxon>Rodentia</taxon>
        <taxon>Myomorpha</taxon>
        <taxon>Muroidea</taxon>
        <taxon>Muridae</taxon>
        <taxon>Murinae</taxon>
        <taxon>Mus</taxon>
        <taxon>Mus</taxon>
    </lineage>
</organism>
<evidence type="ECO:0000255" key="1"/>
<evidence type="ECO:0000269" key="2">
    <source>
    </source>
</evidence>
<evidence type="ECO:0000269" key="3">
    <source>
    </source>
</evidence>
<evidence type="ECO:0000303" key="4">
    <source>
    </source>
</evidence>
<evidence type="ECO:0000305" key="5"/>
<evidence type="ECO:0000305" key="6">
    <source>
    </source>
</evidence>
<feature type="signal peptide" evidence="1">
    <location>
        <begin position="1"/>
        <end position="20"/>
    </location>
</feature>
<feature type="chain" id="PRO_0000042252" description="Lactase-like protein">
    <location>
        <begin position="21"/>
        <end position="566"/>
    </location>
</feature>
<feature type="topological domain" description="Extracellular" evidence="1">
    <location>
        <begin position="21"/>
        <end position="540"/>
    </location>
</feature>
<feature type="transmembrane region" description="Helical" evidence="1">
    <location>
        <begin position="541"/>
        <end position="561"/>
    </location>
</feature>
<feature type="topological domain" description="Cytoplasmic" evidence="1">
    <location>
        <begin position="562"/>
        <end position="566"/>
    </location>
</feature>
<feature type="glycosylation site" description="N-linked (GlcNAc...) asparagine" evidence="1">
    <location>
        <position position="170"/>
    </location>
</feature>
<feature type="glycosylation site" description="N-linked (GlcNAc...) asparagine" evidence="1">
    <location>
        <position position="244"/>
    </location>
</feature>
<feature type="splice variant" id="VSP_015833" description="In isoform 3." evidence="4">
    <location>
        <begin position="1"/>
        <end position="159"/>
    </location>
</feature>
<feature type="splice variant" id="VSP_015834" description="In isoform 3." evidence="4">
    <original>EPLLRHMHVASEIVVPTVCALSILTAALMLTLLLRRRG</original>
    <variation>GDVAETGSPLHLHLSKHLFRITLLFCCRSSRDVYFSGS</variation>
    <location>
        <begin position="529"/>
        <end position="566"/>
    </location>
</feature>
<sequence>MKPVWVIILGWILLVPRVGTAWRGPPEEASFYYGTFPPGFSWGVGSSAYQTEGAWDEDGKGPSIWDAFTHGRKEQVLGGDTADTACDSYYKVQEDIALLKELQVSHYRFSLSWPRLLPTGVRAEQVNKRGIKFYSDFIDALLKSNITPVVTLHHWDLPQMLQVAYGGWQNVSMTRYFSDYADLCFEVFGDRVKHWLTFSDPRTMVEKGYETGLHAPGLRLQGTGLYVAAHHIIKAHAQAWHSYNNTWRSKQHGLVGISLNCDWGEPVDIDNPDDIEAAERYLQFCLGWFANPIYAGDYPQVMKDHIGTKSAEQGLEMSRLPTFSLQEKSYLKGTSDFLGLGHFTTRYITQRKYPSHQGPSYQNDRDLVELVDPNWPEMGSPWLYSVPWGFRRLLNFAQTQYGDPPIYVTESGAPQKLHCTQFCDEWRIQYLKGYINEMLKAIKDGVDIKGYTSWSLLDKFEWEKGYADKYGFYYVEFNVRNKPRYPKASVQYYKEIITASGFPNPQEVESWRLKALETCSINNQMLATEPLLRHMHVASEIVVPTVCALSILTAALMLTLLLRRRG</sequence>
<name>LCTL_MOUSE</name>
<keyword id="KW-0025">Alternative splicing</keyword>
<keyword id="KW-0256">Endoplasmic reticulum</keyword>
<keyword id="KW-0325">Glycoprotein</keyword>
<keyword id="KW-0472">Membrane</keyword>
<keyword id="KW-1185">Reference proteome</keyword>
<keyword id="KW-0716">Sensory transduction</keyword>
<keyword id="KW-0732">Signal</keyword>
<keyword id="KW-0812">Transmembrane</keyword>
<keyword id="KW-1133">Transmembrane helix</keyword>
<keyword id="KW-0844">Vision</keyword>